<evidence type="ECO:0000250" key="1">
    <source>
        <dbReference type="UniProtKB" id="P21853"/>
    </source>
</evidence>
<evidence type="ECO:0000255" key="2">
    <source>
        <dbReference type="PROSITE-ProRule" id="PRU00648"/>
    </source>
</evidence>
<evidence type="ECO:0000269" key="3">
    <source>
    </source>
</evidence>
<evidence type="ECO:0000269" key="4">
    <source>
    </source>
</evidence>
<evidence type="ECO:0000303" key="5">
    <source>
    </source>
</evidence>
<evidence type="ECO:0000305" key="6"/>
<evidence type="ECO:0000305" key="7">
    <source>
    </source>
</evidence>
<evidence type="ECO:0000305" key="8">
    <source>
    </source>
</evidence>
<evidence type="ECO:0000312" key="9">
    <source>
        <dbReference type="EMBL" id="AAM31865.1"/>
    </source>
</evidence>
<reference key="1">
    <citation type="journal article" date="1995" name="Eur. J. Biochem.">
        <title>Analysis of the vhoGAC and vhtGAC operons from Methanosarcina mazei strain Go1, both encoding a membrane-bound hydrogenase and a cytochrome b.</title>
        <authorList>
            <person name="Deppenmeier U."/>
            <person name="Blaut M."/>
            <person name="Lentes S."/>
            <person name="Herzberg C."/>
            <person name="Gottschalk G."/>
        </authorList>
    </citation>
    <scope>NUCLEOTIDE SEQUENCE [GENOMIC DNA]</scope>
    <scope>INDUCTION</scope>
    <source>
        <strain>ATCC BAA-159 / DSM 3647 / Goe1 / Go1 / JCM 11833 / OCM 88</strain>
    </source>
</reference>
<reference key="2">
    <citation type="journal article" date="2002" name="J. Mol. Microbiol. Biotechnol.">
        <title>The genome of Methanosarcina mazei: evidence for lateral gene transfer between Bacteria and Archaea.</title>
        <authorList>
            <person name="Deppenmeier U."/>
            <person name="Johann A."/>
            <person name="Hartsch T."/>
            <person name="Merkl R."/>
            <person name="Schmitz R.A."/>
            <person name="Martinez-Arias R."/>
            <person name="Henne A."/>
            <person name="Wiezer A."/>
            <person name="Baeumer S."/>
            <person name="Jacobi C."/>
            <person name="Brueggemann H."/>
            <person name="Lienard T."/>
            <person name="Christmann A."/>
            <person name="Boemecke M."/>
            <person name="Steckel S."/>
            <person name="Bhattacharyya A."/>
            <person name="Lykidis A."/>
            <person name="Overbeek R."/>
            <person name="Klenk H.-P."/>
            <person name="Gunsalus R.P."/>
            <person name="Fritz H.-J."/>
            <person name="Gottschalk G."/>
        </authorList>
    </citation>
    <scope>NUCLEOTIDE SEQUENCE [LARGE SCALE GENOMIC DNA]</scope>
    <source>
        <strain>ATCC BAA-159 / DSM 3647 / Goe1 / Go1 / JCM 11833 / OCM 88</strain>
    </source>
</reference>
<reference key="3">
    <citation type="journal article" date="2014" name="Biochim. Biophys. Acta">
        <title>Bioenergetics and anaerobic respiratory chains of aceticlastic methanogens.</title>
        <authorList>
            <person name="Welte C."/>
            <person name="Deppenmeier U."/>
        </authorList>
    </citation>
    <scope>PROBABLE FUNCTION</scope>
    <scope>REVIEW</scope>
</reference>
<proteinExistence type="evidence at transcript level"/>
<organism>
    <name type="scientific">Methanosarcina mazei (strain ATCC BAA-159 / DSM 3647 / Goe1 / Go1 / JCM 11833 / OCM 88)</name>
    <name type="common">Methanosarcina frisia</name>
    <dbReference type="NCBI Taxonomy" id="192952"/>
    <lineage>
        <taxon>Archaea</taxon>
        <taxon>Methanobacteriati</taxon>
        <taxon>Methanobacteriota</taxon>
        <taxon>Stenosarchaea group</taxon>
        <taxon>Methanomicrobia</taxon>
        <taxon>Methanosarcinales</taxon>
        <taxon>Methanosarcinaceae</taxon>
        <taxon>Methanosarcina</taxon>
    </lineage>
</organism>
<gene>
    <name evidence="5" type="primary">vhtG</name>
    <name evidence="9" type="ordered locus">MM_2169</name>
</gene>
<accession>Q50225</accession>
<accession>Q8PV06</accession>
<sequence length="386" mass="41511">MVEMSTGMKNLTRTLESMDFLKMDRRTFMKAVSALGATAFLGTYQTEIVNALEFAETKLIWIHGSECTGCSESLLNGGNPDVAQALTKLNVNLAYHETLCMQQGIWNDGELVNTSELNSEILLEDLYKEGNYILVVEGSIPNGPDGSGRYLVIGNKTFKETLGEAAENANAIVAVGACACWGGITSADSDIEKETDYRGVAFKKTDASKGMLKELGIDKPVINIPGCPAHPDWILLTLGAVILGKIKIPDDLPAALDQYGRPKLFFPPDHTVHENCPRRGYYDRGEFDEEVGGEKCLWKLGCKAPYAHADCGIRRWNGSVSMCTQAGGPCINCVDPGFPDASRPLYVEAEDKGIVGANIDTVAKVAVGAAAVAAGVHAVRRMGKGE</sequence>
<keyword id="KW-0003">3Fe-4S</keyword>
<keyword id="KW-0004">4Fe-4S</keyword>
<keyword id="KW-1003">Cell membrane</keyword>
<keyword id="KW-0408">Iron</keyword>
<keyword id="KW-0411">Iron-sulfur</keyword>
<keyword id="KW-0472">Membrane</keyword>
<keyword id="KW-0479">Metal-binding</keyword>
<keyword id="KW-0484">Methanogenesis</keyword>
<keyword id="KW-0560">Oxidoreductase</keyword>
<keyword id="KW-0732">Signal</keyword>
<comment type="function">
    <text evidence="3">Part of the F420 non-reducing hydrogenase II complex that catalyzes the reduction of methanophenazine to dihydromethanophenazine.</text>
</comment>
<comment type="catalytic activity">
    <reaction evidence="7">
        <text>methanophenazine + H2 = dihydromethanophenazine</text>
        <dbReference type="Rhea" id="RHEA:24436"/>
        <dbReference type="ChEBI" id="CHEBI:18276"/>
        <dbReference type="ChEBI" id="CHEBI:29118"/>
        <dbReference type="ChEBI" id="CHEBI:50375"/>
        <dbReference type="EC" id="1.12.98.3"/>
    </reaction>
</comment>
<comment type="cofactor">
    <cofactor evidence="1">
        <name>[4Fe-4S] cluster</name>
        <dbReference type="ChEBI" id="CHEBI:49883"/>
    </cofactor>
    <text evidence="1">Binds 2 [4Fe-4S] clusters.</text>
</comment>
<comment type="cofactor">
    <cofactor evidence="1">
        <name>[3Fe-4S] cluster</name>
        <dbReference type="ChEBI" id="CHEBI:21137"/>
    </cofactor>
    <text evidence="1">Binds 1 [3Fe-4S] cluster.</text>
</comment>
<comment type="subunit">
    <text evidence="7 8">Composed of a large subunit (VhtA), a small subunit (VhtG) and a cytochrome subunit (VhtC).</text>
</comment>
<comment type="subcellular location">
    <subcellularLocation>
        <location evidence="7">Cell membrane</location>
        <topology evidence="7">Peripheral membrane protein</topology>
    </subcellularLocation>
    <text evidence="6">Likely localized in the pseudo-periplasm.</text>
</comment>
<comment type="induction">
    <text evidence="4">Expressed in methanol-grown cells.</text>
</comment>
<comment type="PTM">
    <text evidence="2">Predicted to be exported by the Tat system. The position of the signal peptide cleavage has not been experimentally proven.</text>
</comment>
<comment type="similarity">
    <text evidence="6">Belongs to the [NiFe]/[NiFeSe] hydrogenase small subunit family.</text>
</comment>
<comment type="sequence caution" evidence="6">
    <conflict type="erroneous initiation">
        <sequence resource="EMBL-CDS" id="CAA58176"/>
    </conflict>
    <text>Truncated N-terminus.</text>
</comment>
<feature type="signal peptide" description="Tat-type signal" evidence="2">
    <location>
        <begin position="1"/>
        <end position="51"/>
    </location>
</feature>
<feature type="chain" id="PRO_0000459034" description="F420 non-reducing hydrogenase II small subunit">
    <location>
        <begin position="52"/>
        <end position="386"/>
    </location>
</feature>
<feature type="binding site" evidence="1">
    <location>
        <position position="67"/>
    </location>
    <ligand>
        <name>[4Fe-4S] cluster</name>
        <dbReference type="ChEBI" id="CHEBI:49883"/>
        <label>1</label>
    </ligand>
</feature>
<feature type="binding site" evidence="1">
    <location>
        <position position="70"/>
    </location>
    <ligand>
        <name>[4Fe-4S] cluster</name>
        <dbReference type="ChEBI" id="CHEBI:49883"/>
        <label>1</label>
    </ligand>
</feature>
<feature type="binding site" evidence="1">
    <location>
        <position position="178"/>
    </location>
    <ligand>
        <name>[4Fe-4S] cluster</name>
        <dbReference type="ChEBI" id="CHEBI:49883"/>
        <label>1</label>
    </ligand>
</feature>
<feature type="binding site" evidence="1">
    <location>
        <position position="227"/>
    </location>
    <ligand>
        <name>[4Fe-4S] cluster</name>
        <dbReference type="ChEBI" id="CHEBI:49883"/>
        <label>1</label>
    </ligand>
</feature>
<feature type="binding site" evidence="1">
    <location>
        <position position="273"/>
    </location>
    <ligand>
        <name>[4Fe-4S] cluster</name>
        <dbReference type="ChEBI" id="CHEBI:49883"/>
        <label>2</label>
    </ligand>
</feature>
<feature type="binding site" evidence="1">
    <location>
        <position position="276"/>
    </location>
    <ligand>
        <name>[4Fe-4S] cluster</name>
        <dbReference type="ChEBI" id="CHEBI:49883"/>
        <label>2</label>
    </ligand>
</feature>
<feature type="binding site" evidence="1">
    <location>
        <position position="296"/>
    </location>
    <ligand>
        <name>[4Fe-4S] cluster</name>
        <dbReference type="ChEBI" id="CHEBI:49883"/>
        <label>2</label>
    </ligand>
</feature>
<feature type="binding site" evidence="1">
    <location>
        <position position="302"/>
    </location>
    <ligand>
        <name>[4Fe-4S] cluster</name>
        <dbReference type="ChEBI" id="CHEBI:49883"/>
        <label>2</label>
    </ligand>
</feature>
<feature type="binding site" evidence="1">
    <location>
        <position position="311"/>
    </location>
    <ligand>
        <name>[3Fe-4S] cluster</name>
        <dbReference type="ChEBI" id="CHEBI:21137"/>
    </ligand>
</feature>
<feature type="binding site" evidence="1">
    <location>
        <position position="330"/>
    </location>
    <ligand>
        <name>[3Fe-4S] cluster</name>
        <dbReference type="ChEBI" id="CHEBI:21137"/>
    </ligand>
</feature>
<feature type="binding site" evidence="1">
    <location>
        <position position="333"/>
    </location>
    <ligand>
        <name>[3Fe-4S] cluster</name>
        <dbReference type="ChEBI" id="CHEBI:21137"/>
    </ligand>
</feature>
<name>VHTG_METMA</name>
<protein>
    <recommendedName>
        <fullName evidence="6">F420 non-reducing hydrogenase II small subunit</fullName>
        <ecNumber evidence="7">1.12.98.3</ecNumber>
    </recommendedName>
    <alternativeName>
        <fullName evidence="6">F420-nonreactive hydrogenase II small subunit</fullName>
    </alternativeName>
    <alternativeName>
        <fullName evidence="6">Methanosarcina-phenazine hydrogenase II small subunit</fullName>
    </alternativeName>
</protein>
<dbReference type="EC" id="1.12.98.3" evidence="7"/>
<dbReference type="EMBL" id="X83112">
    <property type="protein sequence ID" value="CAA58176.1"/>
    <property type="status" value="ALT_INIT"/>
    <property type="molecule type" value="Genomic_DNA"/>
</dbReference>
<dbReference type="EMBL" id="AE008384">
    <property type="protein sequence ID" value="AAM31865.1"/>
    <property type="molecule type" value="Genomic_DNA"/>
</dbReference>
<dbReference type="PIR" id="S67477">
    <property type="entry name" value="S67477"/>
</dbReference>
<dbReference type="SMR" id="Q50225"/>
<dbReference type="KEGG" id="mma:MM_2169"/>
<dbReference type="PATRIC" id="fig|192952.21.peg.2485"/>
<dbReference type="eggNOG" id="arCOG02474">
    <property type="taxonomic scope" value="Archaea"/>
</dbReference>
<dbReference type="HOGENOM" id="CLU_046107_1_2_2"/>
<dbReference type="Proteomes" id="UP000000595">
    <property type="component" value="Chromosome"/>
</dbReference>
<dbReference type="GO" id="GO:0044569">
    <property type="term" value="C:[Ni-Fe] hydrogenase complex"/>
    <property type="evidence" value="ECO:0007669"/>
    <property type="project" value="TreeGrafter"/>
</dbReference>
<dbReference type="GO" id="GO:0009375">
    <property type="term" value="C:ferredoxin hydrogenase complex"/>
    <property type="evidence" value="ECO:0007669"/>
    <property type="project" value="InterPro"/>
</dbReference>
<dbReference type="GO" id="GO:0005886">
    <property type="term" value="C:plasma membrane"/>
    <property type="evidence" value="ECO:0007669"/>
    <property type="project" value="UniProtKB-SubCell"/>
</dbReference>
<dbReference type="GO" id="GO:0051538">
    <property type="term" value="F:3 iron, 4 sulfur cluster binding"/>
    <property type="evidence" value="ECO:0007669"/>
    <property type="project" value="UniProtKB-KW"/>
</dbReference>
<dbReference type="GO" id="GO:0051539">
    <property type="term" value="F:4 iron, 4 sulfur cluster binding"/>
    <property type="evidence" value="ECO:0007669"/>
    <property type="project" value="UniProtKB-KW"/>
</dbReference>
<dbReference type="GO" id="GO:0009055">
    <property type="term" value="F:electron transfer activity"/>
    <property type="evidence" value="ECO:0007669"/>
    <property type="project" value="TreeGrafter"/>
</dbReference>
<dbReference type="GO" id="GO:0008901">
    <property type="term" value="F:ferredoxin hydrogenase activity"/>
    <property type="evidence" value="ECO:0007669"/>
    <property type="project" value="InterPro"/>
</dbReference>
<dbReference type="GO" id="GO:0046872">
    <property type="term" value="F:metal ion binding"/>
    <property type="evidence" value="ECO:0007669"/>
    <property type="project" value="UniProtKB-KW"/>
</dbReference>
<dbReference type="GO" id="GO:0051911">
    <property type="term" value="F:Methanosarcina-phenazine hydrogenase activity"/>
    <property type="evidence" value="ECO:0007669"/>
    <property type="project" value="RHEA"/>
</dbReference>
<dbReference type="GO" id="GO:0015948">
    <property type="term" value="P:methanogenesis"/>
    <property type="evidence" value="ECO:0007669"/>
    <property type="project" value="UniProtKB-KW"/>
</dbReference>
<dbReference type="Gene3D" id="4.10.480.10">
    <property type="entry name" value="Cytochrome-c3 hydrogenase, C-terminal domain"/>
    <property type="match status" value="1"/>
</dbReference>
<dbReference type="Gene3D" id="3.40.50.700">
    <property type="entry name" value="NADH:ubiquinone oxidoreductase-like, 20kDa subunit"/>
    <property type="match status" value="1"/>
</dbReference>
<dbReference type="InterPro" id="IPR027394">
    <property type="entry name" value="Cytochrome-c3_hydrogenase_C"/>
</dbReference>
<dbReference type="InterPro" id="IPR006137">
    <property type="entry name" value="NADH_UbQ_OxRdtase-like_20kDa"/>
</dbReference>
<dbReference type="InterPro" id="IPR037148">
    <property type="entry name" value="NiFe-Hase_small_C_sf"/>
</dbReference>
<dbReference type="InterPro" id="IPR037024">
    <property type="entry name" value="NiFe_Hase_small_N_sf"/>
</dbReference>
<dbReference type="InterPro" id="IPR001821">
    <property type="entry name" value="NiFe_hydrogenase_ssu"/>
</dbReference>
<dbReference type="InterPro" id="IPR006311">
    <property type="entry name" value="TAT_signal"/>
</dbReference>
<dbReference type="InterPro" id="IPR019546">
    <property type="entry name" value="TAT_signal_bac_arc"/>
</dbReference>
<dbReference type="NCBIfam" id="TIGR00391">
    <property type="entry name" value="hydA"/>
    <property type="match status" value="1"/>
</dbReference>
<dbReference type="NCBIfam" id="TIGR01409">
    <property type="entry name" value="TAT_signal_seq"/>
    <property type="match status" value="1"/>
</dbReference>
<dbReference type="PANTHER" id="PTHR30013:SF7">
    <property type="entry name" value="HYDROGENASE-2 SMALL CHAIN"/>
    <property type="match status" value="1"/>
</dbReference>
<dbReference type="PANTHER" id="PTHR30013">
    <property type="entry name" value="NIFE / NIFESE HYDROGENASE SMALL SUBUNIT FAMILY MEMBER"/>
    <property type="match status" value="1"/>
</dbReference>
<dbReference type="Pfam" id="PF14720">
    <property type="entry name" value="NiFe_hyd_SSU_C"/>
    <property type="match status" value="1"/>
</dbReference>
<dbReference type="Pfam" id="PF01058">
    <property type="entry name" value="Oxidored_q6"/>
    <property type="match status" value="1"/>
</dbReference>
<dbReference type="PIRSF" id="PIRSF000310">
    <property type="entry name" value="NiFe_hyd_ssu"/>
    <property type="match status" value="1"/>
</dbReference>
<dbReference type="SUPFAM" id="SSF56770">
    <property type="entry name" value="HydA/Nqo6-like"/>
    <property type="match status" value="1"/>
</dbReference>
<dbReference type="PROSITE" id="PS51318">
    <property type="entry name" value="TAT"/>
    <property type="match status" value="1"/>
</dbReference>